<keyword id="KW-0067">ATP-binding</keyword>
<keyword id="KW-0378">Hydrolase</keyword>
<keyword id="KW-0547">Nucleotide-binding</keyword>
<protein>
    <recommendedName>
        <fullName evidence="1">5-oxoprolinase subunit A</fullName>
        <shortName evidence="1">5-OPase subunit A</shortName>
        <ecNumber evidence="1">3.5.2.9</ecNumber>
    </recommendedName>
    <alternativeName>
        <fullName evidence="1">5-oxoprolinase (ATP-hydrolyzing) subunit A</fullName>
    </alternativeName>
</protein>
<feature type="chain" id="PRO_1000132041" description="5-oxoprolinase subunit A">
    <location>
        <begin position="1"/>
        <end position="254"/>
    </location>
</feature>
<name>PXPA_BACMK</name>
<proteinExistence type="inferred from homology"/>
<evidence type="ECO:0000255" key="1">
    <source>
        <dbReference type="HAMAP-Rule" id="MF_00691"/>
    </source>
</evidence>
<dbReference type="EC" id="3.5.2.9" evidence="1"/>
<dbReference type="EMBL" id="CP000903">
    <property type="protein sequence ID" value="ABY44065.1"/>
    <property type="molecule type" value="Genomic_DNA"/>
</dbReference>
<dbReference type="RefSeq" id="WP_002142354.1">
    <property type="nucleotide sequence ID" value="NC_010184.1"/>
</dbReference>
<dbReference type="SMR" id="A9VKB0"/>
<dbReference type="KEGG" id="bwe:BcerKBAB4_2872"/>
<dbReference type="eggNOG" id="COG1540">
    <property type="taxonomic scope" value="Bacteria"/>
</dbReference>
<dbReference type="HOGENOM" id="CLU_069535_0_0_9"/>
<dbReference type="Proteomes" id="UP000002154">
    <property type="component" value="Chromosome"/>
</dbReference>
<dbReference type="GO" id="GO:0017168">
    <property type="term" value="F:5-oxoprolinase (ATP-hydrolyzing) activity"/>
    <property type="evidence" value="ECO:0007669"/>
    <property type="project" value="UniProtKB-UniRule"/>
</dbReference>
<dbReference type="GO" id="GO:0005524">
    <property type="term" value="F:ATP binding"/>
    <property type="evidence" value="ECO:0007669"/>
    <property type="project" value="UniProtKB-UniRule"/>
</dbReference>
<dbReference type="GO" id="GO:0005975">
    <property type="term" value="P:carbohydrate metabolic process"/>
    <property type="evidence" value="ECO:0007669"/>
    <property type="project" value="InterPro"/>
</dbReference>
<dbReference type="CDD" id="cd10787">
    <property type="entry name" value="LamB_YcsF_like"/>
    <property type="match status" value="1"/>
</dbReference>
<dbReference type="Gene3D" id="3.20.20.370">
    <property type="entry name" value="Glycoside hydrolase/deacetylase"/>
    <property type="match status" value="1"/>
</dbReference>
<dbReference type="HAMAP" id="MF_00691">
    <property type="entry name" value="PxpA"/>
    <property type="match status" value="1"/>
</dbReference>
<dbReference type="InterPro" id="IPR011330">
    <property type="entry name" value="Glyco_hydro/deAcase_b/a-brl"/>
</dbReference>
<dbReference type="InterPro" id="IPR005501">
    <property type="entry name" value="LamB/YcsF/PxpA-like"/>
</dbReference>
<dbReference type="NCBIfam" id="NF003813">
    <property type="entry name" value="PRK05406.1-2"/>
    <property type="match status" value="1"/>
</dbReference>
<dbReference type="NCBIfam" id="NF003814">
    <property type="entry name" value="PRK05406.1-3"/>
    <property type="match status" value="1"/>
</dbReference>
<dbReference type="NCBIfam" id="NF003816">
    <property type="entry name" value="PRK05406.1-5"/>
    <property type="match status" value="1"/>
</dbReference>
<dbReference type="PANTHER" id="PTHR30292:SF0">
    <property type="entry name" value="5-OXOPROLINASE SUBUNIT A"/>
    <property type="match status" value="1"/>
</dbReference>
<dbReference type="PANTHER" id="PTHR30292">
    <property type="entry name" value="UNCHARACTERIZED PROTEIN YBGL-RELATED"/>
    <property type="match status" value="1"/>
</dbReference>
<dbReference type="Pfam" id="PF03746">
    <property type="entry name" value="LamB_YcsF"/>
    <property type="match status" value="1"/>
</dbReference>
<dbReference type="SUPFAM" id="SSF88713">
    <property type="entry name" value="Glycoside hydrolase/deacetylase"/>
    <property type="match status" value="1"/>
</dbReference>
<reference key="1">
    <citation type="journal article" date="2008" name="Chem. Biol. Interact.">
        <title>Extending the Bacillus cereus group genomics to putative food-borne pathogens of different toxicity.</title>
        <authorList>
            <person name="Lapidus A."/>
            <person name="Goltsman E."/>
            <person name="Auger S."/>
            <person name="Galleron N."/>
            <person name="Segurens B."/>
            <person name="Dossat C."/>
            <person name="Land M.L."/>
            <person name="Broussolle V."/>
            <person name="Brillard J."/>
            <person name="Guinebretiere M.-H."/>
            <person name="Sanchis V."/>
            <person name="Nguen-the C."/>
            <person name="Lereclus D."/>
            <person name="Richardson P."/>
            <person name="Wincker P."/>
            <person name="Weissenbach J."/>
            <person name="Ehrlich S.D."/>
            <person name="Sorokin A."/>
        </authorList>
    </citation>
    <scope>NUCLEOTIDE SEQUENCE [LARGE SCALE GENOMIC DNA]</scope>
    <source>
        <strain>KBAB4</strain>
    </source>
</reference>
<gene>
    <name evidence="1" type="primary">pxpA</name>
    <name type="ordered locus">BcerKBAB4_2872</name>
</gene>
<accession>A9VKB0</accession>
<comment type="function">
    <text evidence="1">Catalyzes the cleavage of 5-oxoproline to form L-glutamate coupled to the hydrolysis of ATP to ADP and inorganic phosphate.</text>
</comment>
<comment type="catalytic activity">
    <reaction evidence="1">
        <text>5-oxo-L-proline + ATP + 2 H2O = L-glutamate + ADP + phosphate + H(+)</text>
        <dbReference type="Rhea" id="RHEA:10348"/>
        <dbReference type="ChEBI" id="CHEBI:15377"/>
        <dbReference type="ChEBI" id="CHEBI:15378"/>
        <dbReference type="ChEBI" id="CHEBI:29985"/>
        <dbReference type="ChEBI" id="CHEBI:30616"/>
        <dbReference type="ChEBI" id="CHEBI:43474"/>
        <dbReference type="ChEBI" id="CHEBI:58402"/>
        <dbReference type="ChEBI" id="CHEBI:456216"/>
        <dbReference type="EC" id="3.5.2.9"/>
    </reaction>
</comment>
<comment type="subunit">
    <text evidence="1">Forms a complex composed of PxpA, PxpB and PxpC.</text>
</comment>
<comment type="similarity">
    <text evidence="1">Belongs to the LamB/PxpA family.</text>
</comment>
<organism>
    <name type="scientific">Bacillus mycoides (strain KBAB4)</name>
    <name type="common">Bacillus weihenstephanensis</name>
    <dbReference type="NCBI Taxonomy" id="315730"/>
    <lineage>
        <taxon>Bacteria</taxon>
        <taxon>Bacillati</taxon>
        <taxon>Bacillota</taxon>
        <taxon>Bacilli</taxon>
        <taxon>Bacillales</taxon>
        <taxon>Bacillaceae</taxon>
        <taxon>Bacillus</taxon>
        <taxon>Bacillus cereus group</taxon>
    </lineage>
</organism>
<sequence>MTTIDLNCDLGESFGAYKMGNDDEILPFVSSINVACGFHAGDPAVMRQTVEKALQHNVAIGAHPGFPDLIGFGRRNMSVSASEVYDYVLYQIGALDGFVKAAGGKMQHVKPHGALYNMAVTDSEIADAIAKAIYHINPGLLLYGLANSEAFIKATEKYNITLVQEAFADRTYKQDGTLTSRTEENALIKNEDEAIKQVLQMVKEGYVESVNGGKVAVQAQTICLHGDGEKAVQFAEKIYRTFKLNGISICAPNK</sequence>